<organism>
    <name type="scientific">Burkholderia pseudomallei (strain 1106a)</name>
    <dbReference type="NCBI Taxonomy" id="357348"/>
    <lineage>
        <taxon>Bacteria</taxon>
        <taxon>Pseudomonadati</taxon>
        <taxon>Pseudomonadota</taxon>
        <taxon>Betaproteobacteria</taxon>
        <taxon>Burkholderiales</taxon>
        <taxon>Burkholderiaceae</taxon>
        <taxon>Burkholderia</taxon>
        <taxon>pseudomallei group</taxon>
    </lineage>
</organism>
<name>METE_BURP0</name>
<proteinExistence type="inferred from homology"/>
<comment type="function">
    <text evidence="1">Catalyzes the transfer of a methyl group from 5-methyltetrahydrofolate to homocysteine resulting in methionine formation.</text>
</comment>
<comment type="catalytic activity">
    <reaction evidence="1">
        <text>5-methyltetrahydropteroyltri-L-glutamate + L-homocysteine = tetrahydropteroyltri-L-glutamate + L-methionine</text>
        <dbReference type="Rhea" id="RHEA:21196"/>
        <dbReference type="ChEBI" id="CHEBI:57844"/>
        <dbReference type="ChEBI" id="CHEBI:58140"/>
        <dbReference type="ChEBI" id="CHEBI:58199"/>
        <dbReference type="ChEBI" id="CHEBI:58207"/>
        <dbReference type="EC" id="2.1.1.14"/>
    </reaction>
</comment>
<comment type="cofactor">
    <cofactor evidence="1">
        <name>Zn(2+)</name>
        <dbReference type="ChEBI" id="CHEBI:29105"/>
    </cofactor>
    <text evidence="1">Binds 1 zinc ion per subunit.</text>
</comment>
<comment type="pathway">
    <text evidence="1">Amino-acid biosynthesis; L-methionine biosynthesis via de novo pathway; L-methionine from L-homocysteine (MetE route): step 1/1.</text>
</comment>
<comment type="similarity">
    <text evidence="1">Belongs to the vitamin-B12 independent methionine synthase family.</text>
</comment>
<dbReference type="EC" id="2.1.1.14" evidence="1"/>
<dbReference type="EMBL" id="CP000572">
    <property type="protein sequence ID" value="ABN88891.1"/>
    <property type="molecule type" value="Genomic_DNA"/>
</dbReference>
<dbReference type="RefSeq" id="WP_004533875.1">
    <property type="nucleotide sequence ID" value="NC_009076.1"/>
</dbReference>
<dbReference type="SMR" id="A3NY08"/>
<dbReference type="GeneID" id="93061134"/>
<dbReference type="KEGG" id="bpl:BURPS1106A_2985"/>
<dbReference type="HOGENOM" id="CLU_013175_0_0_4"/>
<dbReference type="UniPathway" id="UPA00051">
    <property type="reaction ID" value="UER00082"/>
</dbReference>
<dbReference type="Proteomes" id="UP000006738">
    <property type="component" value="Chromosome I"/>
</dbReference>
<dbReference type="GO" id="GO:0003871">
    <property type="term" value="F:5-methyltetrahydropteroyltriglutamate-homocysteine S-methyltransferase activity"/>
    <property type="evidence" value="ECO:0007669"/>
    <property type="project" value="UniProtKB-UniRule"/>
</dbReference>
<dbReference type="GO" id="GO:0008270">
    <property type="term" value="F:zinc ion binding"/>
    <property type="evidence" value="ECO:0007669"/>
    <property type="project" value="InterPro"/>
</dbReference>
<dbReference type="GO" id="GO:0009086">
    <property type="term" value="P:methionine biosynthetic process"/>
    <property type="evidence" value="ECO:0007669"/>
    <property type="project" value="UniProtKB-UniRule"/>
</dbReference>
<dbReference type="GO" id="GO:0032259">
    <property type="term" value="P:methylation"/>
    <property type="evidence" value="ECO:0007669"/>
    <property type="project" value="UniProtKB-KW"/>
</dbReference>
<dbReference type="CDD" id="cd03311">
    <property type="entry name" value="CIMS_C_terminal_like"/>
    <property type="match status" value="1"/>
</dbReference>
<dbReference type="CDD" id="cd03312">
    <property type="entry name" value="CIMS_N_terminal_like"/>
    <property type="match status" value="1"/>
</dbReference>
<dbReference type="Gene3D" id="3.20.20.210">
    <property type="match status" value="2"/>
</dbReference>
<dbReference type="HAMAP" id="MF_00172">
    <property type="entry name" value="Meth_synth"/>
    <property type="match status" value="1"/>
</dbReference>
<dbReference type="InterPro" id="IPR013215">
    <property type="entry name" value="Cbl-indep_Met_Synth_N"/>
</dbReference>
<dbReference type="InterPro" id="IPR006276">
    <property type="entry name" value="Cobalamin-indep_Met_synthase"/>
</dbReference>
<dbReference type="InterPro" id="IPR002629">
    <property type="entry name" value="Met_Synth_C/arc"/>
</dbReference>
<dbReference type="InterPro" id="IPR038071">
    <property type="entry name" value="UROD/MetE-like_sf"/>
</dbReference>
<dbReference type="NCBIfam" id="TIGR01371">
    <property type="entry name" value="met_syn_B12ind"/>
    <property type="match status" value="1"/>
</dbReference>
<dbReference type="NCBIfam" id="NF003556">
    <property type="entry name" value="PRK05222.1"/>
    <property type="match status" value="1"/>
</dbReference>
<dbReference type="PANTHER" id="PTHR30519">
    <property type="entry name" value="5-METHYLTETRAHYDROPTEROYLTRIGLUTAMATE--HOMOCYSTEINE METHYLTRANSFERASE"/>
    <property type="match status" value="1"/>
</dbReference>
<dbReference type="Pfam" id="PF08267">
    <property type="entry name" value="Meth_synt_1"/>
    <property type="match status" value="1"/>
</dbReference>
<dbReference type="Pfam" id="PF01717">
    <property type="entry name" value="Meth_synt_2"/>
    <property type="match status" value="1"/>
</dbReference>
<dbReference type="PIRSF" id="PIRSF000382">
    <property type="entry name" value="MeTrfase_B12_ind"/>
    <property type="match status" value="1"/>
</dbReference>
<dbReference type="SUPFAM" id="SSF51726">
    <property type="entry name" value="UROD/MetE-like"/>
    <property type="match status" value="2"/>
</dbReference>
<sequence>MTTAHILGFPRIGAQRELKFALERYWRDGASADAERALVDTGRALRAEHWRIERDAGLDCVTVGDFAWYDHVLTTLAHVGGLPRRFGFDARALTLADYFAAARGNAAQPAMEMTKWFDTNYHYLVPEYSPATTFGPGVEWLFDEVREARALGHRAKAALVGPLTLLWLGKARDGLVERLALLPRLVPAYRALLARLREAGVDWVQIDEPIFSLDLPDAWRDAARPTYEALAPGAPKLLVATYFDDASEHAALLKALPVAGLHVDLVRADAQLDAFVADYPADKVLSCGIVDGRNVWRNDLDRSLARLAPVRDALGERLWVATSCSLLHVPVDLAHEPRLDEELKTWLAFAAQKTREVAALRDALVKGRAAVAAEFDDAAAAAAARRTSARIHNPLVKRRVAALTDADARRASAYSVRAAAQRARFGLPLLPTTTIGSFPQTPEIRRARAAFKQGVLDHLGYLEAMREQVRIAIDKQLAYGLDVLVHGEAERNDMVEYFGELLWGFAITSNGWVQSYGSRCVKPPLVYGDVYLPEPMTVGWASYAQSLSAKPVKGMLTGPVTMLQWSFVRDDQPRATTALQIALALRQETLDLEKAGIGMIQIDEPALREGLPLKARERAAYLDWAVRAFGIAASGVADDTQIHTHMCYSEFGDILPSIAALDADVISIETTRSNMELLDAFETFDYPNEIGPGVYDIHSPRVPDADEIERLILLALERIPAQRLWVNPDCGLKTREWRQVDAALAAMVDAAKRVRQKVEEAVPA</sequence>
<protein>
    <recommendedName>
        <fullName evidence="1">5-methyltetrahydropteroyltriglutamate--homocysteine methyltransferase</fullName>
        <ecNumber evidence="1">2.1.1.14</ecNumber>
    </recommendedName>
    <alternativeName>
        <fullName evidence="1">Cobalamin-independent methionine synthase</fullName>
    </alternativeName>
    <alternativeName>
        <fullName evidence="1">Methionine synthase, vitamin-B12 independent isozyme</fullName>
    </alternativeName>
</protein>
<accession>A3NY08</accession>
<keyword id="KW-0028">Amino-acid biosynthesis</keyword>
<keyword id="KW-0479">Metal-binding</keyword>
<keyword id="KW-0486">Methionine biosynthesis</keyword>
<keyword id="KW-0489">Methyltransferase</keyword>
<keyword id="KW-0677">Repeat</keyword>
<keyword id="KW-0808">Transferase</keyword>
<keyword id="KW-0862">Zinc</keyword>
<gene>
    <name evidence="1" type="primary">metE</name>
    <name type="ordered locus">BURPS1106A_2985</name>
</gene>
<reference key="1">
    <citation type="journal article" date="2010" name="Genome Biol. Evol.">
        <title>Continuing evolution of Burkholderia mallei through genome reduction and large-scale rearrangements.</title>
        <authorList>
            <person name="Losada L."/>
            <person name="Ronning C.M."/>
            <person name="DeShazer D."/>
            <person name="Woods D."/>
            <person name="Fedorova N."/>
            <person name="Kim H.S."/>
            <person name="Shabalina S.A."/>
            <person name="Pearson T.R."/>
            <person name="Brinkac L."/>
            <person name="Tan P."/>
            <person name="Nandi T."/>
            <person name="Crabtree J."/>
            <person name="Badger J."/>
            <person name="Beckstrom-Sternberg S."/>
            <person name="Saqib M."/>
            <person name="Schutzer S.E."/>
            <person name="Keim P."/>
            <person name="Nierman W.C."/>
        </authorList>
    </citation>
    <scope>NUCLEOTIDE SEQUENCE [LARGE SCALE GENOMIC DNA]</scope>
    <source>
        <strain>1106a</strain>
    </source>
</reference>
<evidence type="ECO:0000255" key="1">
    <source>
        <dbReference type="HAMAP-Rule" id="MF_00172"/>
    </source>
</evidence>
<feature type="chain" id="PRO_1000071604" description="5-methyltetrahydropteroyltriglutamate--homocysteine methyltransferase">
    <location>
        <begin position="1"/>
        <end position="764"/>
    </location>
</feature>
<feature type="active site" description="Proton donor" evidence="1">
    <location>
        <position position="698"/>
    </location>
</feature>
<feature type="binding site" evidence="1">
    <location>
        <begin position="16"/>
        <end position="19"/>
    </location>
    <ligand>
        <name>5-methyltetrahydropteroyltri-L-glutamate</name>
        <dbReference type="ChEBI" id="CHEBI:58207"/>
    </ligand>
</feature>
<feature type="binding site" evidence="1">
    <location>
        <position position="115"/>
    </location>
    <ligand>
        <name>5-methyltetrahydropteroyltri-L-glutamate</name>
        <dbReference type="ChEBI" id="CHEBI:58207"/>
    </ligand>
</feature>
<feature type="binding site" evidence="1">
    <location>
        <begin position="435"/>
        <end position="437"/>
    </location>
    <ligand>
        <name>L-homocysteine</name>
        <dbReference type="ChEBI" id="CHEBI:58199"/>
    </ligand>
</feature>
<feature type="binding site" evidence="1">
    <location>
        <begin position="435"/>
        <end position="437"/>
    </location>
    <ligand>
        <name>L-methionine</name>
        <dbReference type="ChEBI" id="CHEBI:57844"/>
    </ligand>
</feature>
<feature type="binding site" evidence="1">
    <location>
        <position position="488"/>
    </location>
    <ligand>
        <name>L-homocysteine</name>
        <dbReference type="ChEBI" id="CHEBI:58199"/>
    </ligand>
</feature>
<feature type="binding site" evidence="1">
    <location>
        <position position="488"/>
    </location>
    <ligand>
        <name>L-methionine</name>
        <dbReference type="ChEBI" id="CHEBI:57844"/>
    </ligand>
</feature>
<feature type="binding site" evidence="1">
    <location>
        <begin position="519"/>
        <end position="520"/>
    </location>
    <ligand>
        <name>5-methyltetrahydropteroyltri-L-glutamate</name>
        <dbReference type="ChEBI" id="CHEBI:58207"/>
    </ligand>
</feature>
<feature type="binding site" evidence="1">
    <location>
        <position position="565"/>
    </location>
    <ligand>
        <name>5-methyltetrahydropteroyltri-L-glutamate</name>
        <dbReference type="ChEBI" id="CHEBI:58207"/>
    </ligand>
</feature>
<feature type="binding site" evidence="1">
    <location>
        <position position="603"/>
    </location>
    <ligand>
        <name>L-homocysteine</name>
        <dbReference type="ChEBI" id="CHEBI:58199"/>
    </ligand>
</feature>
<feature type="binding site" evidence="1">
    <location>
        <position position="603"/>
    </location>
    <ligand>
        <name>L-methionine</name>
        <dbReference type="ChEBI" id="CHEBI:57844"/>
    </ligand>
</feature>
<feature type="binding site" evidence="1">
    <location>
        <position position="609"/>
    </location>
    <ligand>
        <name>5-methyltetrahydropteroyltri-L-glutamate</name>
        <dbReference type="ChEBI" id="CHEBI:58207"/>
    </ligand>
</feature>
<feature type="binding site" evidence="1">
    <location>
        <position position="645"/>
    </location>
    <ligand>
        <name>Zn(2+)</name>
        <dbReference type="ChEBI" id="CHEBI:29105"/>
        <note>catalytic</note>
    </ligand>
</feature>
<feature type="binding site" evidence="1">
    <location>
        <position position="647"/>
    </location>
    <ligand>
        <name>Zn(2+)</name>
        <dbReference type="ChEBI" id="CHEBI:29105"/>
        <note>catalytic</note>
    </ligand>
</feature>
<feature type="binding site" evidence="1">
    <location>
        <position position="669"/>
    </location>
    <ligand>
        <name>Zn(2+)</name>
        <dbReference type="ChEBI" id="CHEBI:29105"/>
        <note>catalytic</note>
    </ligand>
</feature>
<feature type="binding site" evidence="1">
    <location>
        <position position="730"/>
    </location>
    <ligand>
        <name>Zn(2+)</name>
        <dbReference type="ChEBI" id="CHEBI:29105"/>
        <note>catalytic</note>
    </ligand>
</feature>